<gene>
    <name evidence="1" type="primary">nuoC</name>
    <name evidence="1" type="synonym">nuoCD</name>
    <name evidence="1" type="synonym">nuoD</name>
    <name type="ordered locus">c2827</name>
</gene>
<name>NUOCD_ECOL6</name>
<feature type="chain" id="PRO_0000358639" description="NADH-quinone oxidoreductase subunit C/D">
    <location>
        <begin position="1"/>
        <end position="600"/>
    </location>
</feature>
<feature type="region of interest" description="NADH dehydrogenase I subunit C" evidence="1">
    <location>
        <begin position="1"/>
        <end position="190"/>
    </location>
</feature>
<feature type="region of interest" description="NADH dehydrogenase I subunit D" evidence="1">
    <location>
        <begin position="214"/>
        <end position="600"/>
    </location>
</feature>
<accession>Q8FFJ7</accession>
<protein>
    <recommendedName>
        <fullName evidence="1">NADH-quinone oxidoreductase subunit C/D</fullName>
        <ecNumber evidence="1">7.1.1.-</ecNumber>
    </recommendedName>
    <alternativeName>
        <fullName evidence="1">NADH dehydrogenase I subunit C/D</fullName>
    </alternativeName>
    <alternativeName>
        <fullName evidence="1">NDH-1 subunit C/D</fullName>
    </alternativeName>
</protein>
<evidence type="ECO:0000255" key="1">
    <source>
        <dbReference type="HAMAP-Rule" id="MF_01359"/>
    </source>
</evidence>
<sequence>MVNNMTDLTAQEPAWQTRDHLDDPVIGELRNRFGPDAFTVQATRTGVPVVWIKREQLLEVGDFLKKLPKPYVMLFDLHGMDERLRTHREGLPAADFSVFYHLISIDRNRDIMLKVALAENDLHVPTFTKLFPNANWYERETWDLFGITFDGHPNLRRIMMPQTWKGHPLRKDYPARATEFSPFELTKAKQDLEMEALTFKPEEWGMKRGTENEDFMFLNLGPNHPSAHGAFRIVLQLDGEEIVDCVPDIGYHHRGAEKMGERQSWHSYIPYTDRIEYLGGCVNEMPYVLAVEKLAGITVPDRVNVIRVMLSELFRINSHLLYISTFIQDVGAMTPVFFAFTDRQKIYDLVEAITGFRMHPAWFRIGGVAHDLPRGWDRLLREFLDWMPKRLASYEKAALQNTILKGRSQGVAAYGAKEALEWGTTGAGLRATGIDFDVRKARPYSGYENFDFEIPVGGGVSDCYTRVMLKVEELRQSLRILEQCLNNMPEGPFKADHPLTTPPPKERTLQHIETLITHFLQVSWGPVMPANESFQMVEATKGINSYYLTSDGSTMSYRTRIRTPSYAHLQQIPAAIRGSLVSDLIVYLGSIDFVMSDVDR</sequence>
<organism>
    <name type="scientific">Escherichia coli O6:H1 (strain CFT073 / ATCC 700928 / UPEC)</name>
    <dbReference type="NCBI Taxonomy" id="199310"/>
    <lineage>
        <taxon>Bacteria</taxon>
        <taxon>Pseudomonadati</taxon>
        <taxon>Pseudomonadota</taxon>
        <taxon>Gammaproteobacteria</taxon>
        <taxon>Enterobacterales</taxon>
        <taxon>Enterobacteriaceae</taxon>
        <taxon>Escherichia</taxon>
    </lineage>
</organism>
<reference key="1">
    <citation type="journal article" date="2002" name="Proc. Natl. Acad. Sci. U.S.A.">
        <title>Extensive mosaic structure revealed by the complete genome sequence of uropathogenic Escherichia coli.</title>
        <authorList>
            <person name="Welch R.A."/>
            <person name="Burland V."/>
            <person name="Plunkett G. III"/>
            <person name="Redford P."/>
            <person name="Roesch P."/>
            <person name="Rasko D."/>
            <person name="Buckles E.L."/>
            <person name="Liou S.-R."/>
            <person name="Boutin A."/>
            <person name="Hackett J."/>
            <person name="Stroud D."/>
            <person name="Mayhew G.F."/>
            <person name="Rose D.J."/>
            <person name="Zhou S."/>
            <person name="Schwartz D.C."/>
            <person name="Perna N.T."/>
            <person name="Mobley H.L.T."/>
            <person name="Donnenberg M.S."/>
            <person name="Blattner F.R."/>
        </authorList>
    </citation>
    <scope>NUCLEOTIDE SEQUENCE [LARGE SCALE GENOMIC DNA]</scope>
    <source>
        <strain>CFT073 / ATCC 700928 / UPEC</strain>
    </source>
</reference>
<proteinExistence type="inferred from homology"/>
<keyword id="KW-0997">Cell inner membrane</keyword>
<keyword id="KW-1003">Cell membrane</keyword>
<keyword id="KW-0472">Membrane</keyword>
<keyword id="KW-0511">Multifunctional enzyme</keyword>
<keyword id="KW-0520">NAD</keyword>
<keyword id="KW-0874">Quinone</keyword>
<keyword id="KW-1185">Reference proteome</keyword>
<keyword id="KW-1278">Translocase</keyword>
<keyword id="KW-0813">Transport</keyword>
<keyword id="KW-0830">Ubiquinone</keyword>
<comment type="function">
    <text evidence="1">NDH-1 shuttles electrons from NADH, via FMN and iron-sulfur (Fe-S) centers, to quinones in the respiratory chain. The immediate electron acceptor for the enzyme in this species is believed to be ubiquinone. Couples the redox reaction to proton translocation (for every two electrons transferred, four hydrogen ions are translocated across the cytoplasmic membrane), and thus conserves the redox energy in a proton gradient.</text>
</comment>
<comment type="catalytic activity">
    <reaction evidence="1">
        <text>a quinone + NADH + 5 H(+)(in) = a quinol + NAD(+) + 4 H(+)(out)</text>
        <dbReference type="Rhea" id="RHEA:57888"/>
        <dbReference type="ChEBI" id="CHEBI:15378"/>
        <dbReference type="ChEBI" id="CHEBI:24646"/>
        <dbReference type="ChEBI" id="CHEBI:57540"/>
        <dbReference type="ChEBI" id="CHEBI:57945"/>
        <dbReference type="ChEBI" id="CHEBI:132124"/>
    </reaction>
</comment>
<comment type="subunit">
    <text evidence="1">NDH-1 is composed of 13 different subunits. Subunits NuoB, CD, E, F, and G constitute the peripheral sector of the complex.</text>
</comment>
<comment type="subcellular location">
    <subcellularLocation>
        <location evidence="1">Cell inner membrane</location>
        <topology evidence="1">Peripheral membrane protein</topology>
        <orientation evidence="1">Cytoplasmic side</orientation>
    </subcellularLocation>
</comment>
<comment type="similarity">
    <text evidence="1">In the N-terminal section; belongs to the complex I 30 kDa subunit family.</text>
</comment>
<comment type="similarity">
    <text evidence="1">In the C-terminal section; belongs to the complex I 49 kDa subunit family.</text>
</comment>
<dbReference type="EC" id="7.1.1.-" evidence="1"/>
<dbReference type="EMBL" id="AE014075">
    <property type="protein sequence ID" value="AAN81281.1"/>
    <property type="molecule type" value="Genomic_DNA"/>
</dbReference>
<dbReference type="RefSeq" id="WP_000247881.1">
    <property type="nucleotide sequence ID" value="NZ_CP051263.1"/>
</dbReference>
<dbReference type="SMR" id="Q8FFJ7"/>
<dbReference type="STRING" id="199310.c2827"/>
<dbReference type="KEGG" id="ecc:c2827"/>
<dbReference type="eggNOG" id="COG0649">
    <property type="taxonomic scope" value="Bacteria"/>
</dbReference>
<dbReference type="eggNOG" id="COG0852">
    <property type="taxonomic scope" value="Bacteria"/>
</dbReference>
<dbReference type="HOGENOM" id="CLU_015134_3_2_6"/>
<dbReference type="BioCyc" id="ECOL199310:C2827-MONOMER"/>
<dbReference type="Proteomes" id="UP000001410">
    <property type="component" value="Chromosome"/>
</dbReference>
<dbReference type="GO" id="GO:0030964">
    <property type="term" value="C:NADH dehydrogenase complex"/>
    <property type="evidence" value="ECO:0007669"/>
    <property type="project" value="InterPro"/>
</dbReference>
<dbReference type="GO" id="GO:0005886">
    <property type="term" value="C:plasma membrane"/>
    <property type="evidence" value="ECO:0007669"/>
    <property type="project" value="UniProtKB-SubCell"/>
</dbReference>
<dbReference type="GO" id="GO:0051287">
    <property type="term" value="F:NAD binding"/>
    <property type="evidence" value="ECO:0007669"/>
    <property type="project" value="InterPro"/>
</dbReference>
<dbReference type="GO" id="GO:0008137">
    <property type="term" value="F:NADH dehydrogenase (ubiquinone) activity"/>
    <property type="evidence" value="ECO:0007669"/>
    <property type="project" value="InterPro"/>
</dbReference>
<dbReference type="GO" id="GO:0050136">
    <property type="term" value="F:NADH:ubiquinone reductase (non-electrogenic) activity"/>
    <property type="evidence" value="ECO:0007669"/>
    <property type="project" value="UniProtKB-UniRule"/>
</dbReference>
<dbReference type="GO" id="GO:0048038">
    <property type="term" value="F:quinone binding"/>
    <property type="evidence" value="ECO:0007669"/>
    <property type="project" value="UniProtKB-KW"/>
</dbReference>
<dbReference type="FunFam" id="1.10.645.10:FF:000001">
    <property type="entry name" value="NADH-quinone oxidoreductase subunit C/D"/>
    <property type="match status" value="1"/>
</dbReference>
<dbReference type="FunFam" id="3.30.460.80:FF:000001">
    <property type="entry name" value="NADH-quinone oxidoreductase subunit C/D"/>
    <property type="match status" value="1"/>
</dbReference>
<dbReference type="Gene3D" id="1.10.645.10">
    <property type="entry name" value="Cytochrome-c3 Hydrogenase, chain B"/>
    <property type="match status" value="1"/>
</dbReference>
<dbReference type="Gene3D" id="3.30.460.80">
    <property type="entry name" value="NADH:ubiquinone oxidoreductase, 30kDa subunit"/>
    <property type="match status" value="1"/>
</dbReference>
<dbReference type="HAMAP" id="MF_01357">
    <property type="entry name" value="NDH1_NuoC"/>
    <property type="match status" value="1"/>
</dbReference>
<dbReference type="HAMAP" id="MF_01359">
    <property type="entry name" value="NDH1_NuoCD_1"/>
    <property type="match status" value="1"/>
</dbReference>
<dbReference type="HAMAP" id="MF_01358">
    <property type="entry name" value="NDH1_NuoD"/>
    <property type="match status" value="1"/>
</dbReference>
<dbReference type="InterPro" id="IPR010218">
    <property type="entry name" value="NADH_DH_suC"/>
</dbReference>
<dbReference type="InterPro" id="IPR023062">
    <property type="entry name" value="NADH_DH_suCD"/>
</dbReference>
<dbReference type="InterPro" id="IPR001135">
    <property type="entry name" value="NADH_Q_OxRdtase_suD"/>
</dbReference>
<dbReference type="InterPro" id="IPR037232">
    <property type="entry name" value="NADH_quin_OxRdtase_su_C/D-like"/>
</dbReference>
<dbReference type="InterPro" id="IPR001268">
    <property type="entry name" value="NADH_UbQ_OxRdtase_30kDa_su"/>
</dbReference>
<dbReference type="InterPro" id="IPR014029">
    <property type="entry name" value="NADH_UbQ_OxRdtase_49kDa_CS"/>
</dbReference>
<dbReference type="InterPro" id="IPR020396">
    <property type="entry name" value="NADH_UbQ_OxRdtase_CS"/>
</dbReference>
<dbReference type="InterPro" id="IPR022885">
    <property type="entry name" value="NDH1_su_D/H"/>
</dbReference>
<dbReference type="InterPro" id="IPR029014">
    <property type="entry name" value="NiFe-Hase_large"/>
</dbReference>
<dbReference type="NCBIfam" id="TIGR01961">
    <property type="entry name" value="NuoC_fam"/>
    <property type="match status" value="1"/>
</dbReference>
<dbReference type="NCBIfam" id="TIGR01962">
    <property type="entry name" value="NuoD"/>
    <property type="match status" value="1"/>
</dbReference>
<dbReference type="NCBIfam" id="NF004739">
    <property type="entry name" value="PRK06075.1"/>
    <property type="match status" value="1"/>
</dbReference>
<dbReference type="NCBIfam" id="NF008728">
    <property type="entry name" value="PRK11742.1"/>
    <property type="match status" value="1"/>
</dbReference>
<dbReference type="PANTHER" id="PTHR11993:SF45">
    <property type="entry name" value="NADH-QUINONE OXIDOREDUCTASE SUBUNIT C_D"/>
    <property type="match status" value="1"/>
</dbReference>
<dbReference type="PANTHER" id="PTHR11993">
    <property type="entry name" value="NADH-UBIQUINONE OXIDOREDUCTASE 49 KDA SUBUNIT"/>
    <property type="match status" value="1"/>
</dbReference>
<dbReference type="Pfam" id="PF00329">
    <property type="entry name" value="Complex1_30kDa"/>
    <property type="match status" value="1"/>
</dbReference>
<dbReference type="Pfam" id="PF00346">
    <property type="entry name" value="Complex1_49kDa"/>
    <property type="match status" value="1"/>
</dbReference>
<dbReference type="SUPFAM" id="SSF56762">
    <property type="entry name" value="HydB/Nqo4-like"/>
    <property type="match status" value="1"/>
</dbReference>
<dbReference type="SUPFAM" id="SSF143243">
    <property type="entry name" value="Nqo5-like"/>
    <property type="match status" value="1"/>
</dbReference>
<dbReference type="PROSITE" id="PS00542">
    <property type="entry name" value="COMPLEX1_30K"/>
    <property type="match status" value="1"/>
</dbReference>
<dbReference type="PROSITE" id="PS00535">
    <property type="entry name" value="COMPLEX1_49K"/>
    <property type="match status" value="1"/>
</dbReference>